<proteinExistence type="inferred from homology"/>
<dbReference type="EMBL" id="CP000857">
    <property type="protein sequence ID" value="ACN44285.1"/>
    <property type="molecule type" value="Genomic_DNA"/>
</dbReference>
<dbReference type="RefSeq" id="WP_000377163.1">
    <property type="nucleotide sequence ID" value="NC_012125.1"/>
</dbReference>
<dbReference type="SMR" id="C0Q4N0"/>
<dbReference type="KEGG" id="sei:SPC_0093"/>
<dbReference type="HOGENOM" id="CLU_005126_9_3_6"/>
<dbReference type="Proteomes" id="UP000001599">
    <property type="component" value="Chromosome"/>
</dbReference>
<dbReference type="GO" id="GO:0005886">
    <property type="term" value="C:plasma membrane"/>
    <property type="evidence" value="ECO:0007669"/>
    <property type="project" value="UniProtKB-SubCell"/>
</dbReference>
<dbReference type="GO" id="GO:0019899">
    <property type="term" value="F:enzyme binding"/>
    <property type="evidence" value="ECO:0007669"/>
    <property type="project" value="InterPro"/>
</dbReference>
<dbReference type="GO" id="GO:0015503">
    <property type="term" value="F:glutathione-regulated potassium exporter activity"/>
    <property type="evidence" value="ECO:0007669"/>
    <property type="project" value="UniProtKB-UniRule"/>
</dbReference>
<dbReference type="GO" id="GO:0015643">
    <property type="term" value="F:toxic substance binding"/>
    <property type="evidence" value="ECO:0007669"/>
    <property type="project" value="InterPro"/>
</dbReference>
<dbReference type="GO" id="GO:1902600">
    <property type="term" value="P:proton transmembrane transport"/>
    <property type="evidence" value="ECO:0007669"/>
    <property type="project" value="InterPro"/>
</dbReference>
<dbReference type="GO" id="GO:0051595">
    <property type="term" value="P:response to methylglyoxal"/>
    <property type="evidence" value="ECO:0007669"/>
    <property type="project" value="InterPro"/>
</dbReference>
<dbReference type="FunFam" id="1.20.1530.20:FF:000001">
    <property type="entry name" value="Glutathione-regulated potassium-efflux system protein KefB"/>
    <property type="match status" value="1"/>
</dbReference>
<dbReference type="FunFam" id="3.40.50.720:FF:000036">
    <property type="entry name" value="Glutathione-regulated potassium-efflux system protein KefB"/>
    <property type="match status" value="1"/>
</dbReference>
<dbReference type="Gene3D" id="1.20.1530.20">
    <property type="match status" value="1"/>
</dbReference>
<dbReference type="Gene3D" id="3.40.50.720">
    <property type="entry name" value="NAD(P)-binding Rossmann-like Domain"/>
    <property type="match status" value="1"/>
</dbReference>
<dbReference type="HAMAP" id="MF_01413">
    <property type="entry name" value="K_H_efflux_KefC"/>
    <property type="match status" value="1"/>
</dbReference>
<dbReference type="InterPro" id="IPR006153">
    <property type="entry name" value="Cation/H_exchanger_TM"/>
</dbReference>
<dbReference type="InterPro" id="IPR004771">
    <property type="entry name" value="K/H_exchanger"/>
</dbReference>
<dbReference type="InterPro" id="IPR023941">
    <property type="entry name" value="K_H_efflux_KefC"/>
</dbReference>
<dbReference type="InterPro" id="IPR006036">
    <property type="entry name" value="K_uptake_TrkA"/>
</dbReference>
<dbReference type="InterPro" id="IPR038770">
    <property type="entry name" value="Na+/solute_symporter_sf"/>
</dbReference>
<dbReference type="InterPro" id="IPR036291">
    <property type="entry name" value="NAD(P)-bd_dom_sf"/>
</dbReference>
<dbReference type="InterPro" id="IPR003148">
    <property type="entry name" value="RCK_N"/>
</dbReference>
<dbReference type="NCBIfam" id="TIGR00932">
    <property type="entry name" value="2a37"/>
    <property type="match status" value="1"/>
</dbReference>
<dbReference type="NCBIfam" id="NF002924">
    <property type="entry name" value="PRK03562.1"/>
    <property type="match status" value="1"/>
</dbReference>
<dbReference type="PANTHER" id="PTHR46157:SF3">
    <property type="entry name" value="GLUTATHIONE-REGULATED POTASSIUM-EFFLUX SYSTEM PROTEIN KEFC"/>
    <property type="match status" value="1"/>
</dbReference>
<dbReference type="PANTHER" id="PTHR46157">
    <property type="entry name" value="K(+) EFFLUX ANTIPORTER 3, CHLOROPLASTIC"/>
    <property type="match status" value="1"/>
</dbReference>
<dbReference type="Pfam" id="PF00999">
    <property type="entry name" value="Na_H_Exchanger"/>
    <property type="match status" value="1"/>
</dbReference>
<dbReference type="Pfam" id="PF02254">
    <property type="entry name" value="TrkA_N"/>
    <property type="match status" value="1"/>
</dbReference>
<dbReference type="PRINTS" id="PR00335">
    <property type="entry name" value="KUPTAKETRKA"/>
</dbReference>
<dbReference type="SUPFAM" id="SSF51735">
    <property type="entry name" value="NAD(P)-binding Rossmann-fold domains"/>
    <property type="match status" value="1"/>
</dbReference>
<dbReference type="PROSITE" id="PS51201">
    <property type="entry name" value="RCK_N"/>
    <property type="match status" value="1"/>
</dbReference>
<accession>C0Q4N0</accession>
<evidence type="ECO:0000255" key="1">
    <source>
        <dbReference type="HAMAP-Rule" id="MF_01413"/>
    </source>
</evidence>
<evidence type="ECO:0000255" key="2">
    <source>
        <dbReference type="PROSITE-ProRule" id="PRU00543"/>
    </source>
</evidence>
<evidence type="ECO:0000256" key="3">
    <source>
        <dbReference type="SAM" id="MobiDB-lite"/>
    </source>
</evidence>
<keyword id="KW-0050">Antiport</keyword>
<keyword id="KW-0997">Cell inner membrane</keyword>
<keyword id="KW-1003">Cell membrane</keyword>
<keyword id="KW-0406">Ion transport</keyword>
<keyword id="KW-0472">Membrane</keyword>
<keyword id="KW-0630">Potassium</keyword>
<keyword id="KW-0633">Potassium transport</keyword>
<keyword id="KW-0812">Transmembrane</keyword>
<keyword id="KW-1133">Transmembrane helix</keyword>
<keyword id="KW-0813">Transport</keyword>
<reference key="1">
    <citation type="journal article" date="2009" name="PLoS ONE">
        <title>Salmonella paratyphi C: genetic divergence from Salmonella choleraesuis and pathogenic convergence with Salmonella typhi.</title>
        <authorList>
            <person name="Liu W.-Q."/>
            <person name="Feng Y."/>
            <person name="Wang Y."/>
            <person name="Zou Q.-H."/>
            <person name="Chen F."/>
            <person name="Guo J.-T."/>
            <person name="Peng Y.-H."/>
            <person name="Jin Y."/>
            <person name="Li Y.-G."/>
            <person name="Hu S.-N."/>
            <person name="Johnston R.N."/>
            <person name="Liu G.-R."/>
            <person name="Liu S.-L."/>
        </authorList>
    </citation>
    <scope>NUCLEOTIDE SEQUENCE [LARGE SCALE GENOMIC DNA]</scope>
    <source>
        <strain>RKS4594</strain>
    </source>
</reference>
<comment type="function">
    <text evidence="1">Pore-forming subunit of a potassium efflux system that confers protection against electrophiles. Catalyzes K(+)/H(+) antiport.</text>
</comment>
<comment type="subunit">
    <text evidence="1">Homodimer. Interacts with the regulatory subunit KefF.</text>
</comment>
<comment type="subcellular location">
    <subcellularLocation>
        <location evidence="1">Cell inner membrane</location>
        <topology evidence="1">Multi-pass membrane protein</topology>
    </subcellularLocation>
</comment>
<comment type="similarity">
    <text evidence="1">Belongs to the monovalent cation:proton antiporter 2 (CPA2) transporter (TC 2.A.37) family. KefC subfamily.</text>
</comment>
<gene>
    <name evidence="1" type="primary">kefC</name>
    <name type="ordered locus">SPC_0093</name>
</gene>
<protein>
    <recommendedName>
        <fullName evidence="1">Glutathione-regulated potassium-efflux system protein KefC</fullName>
    </recommendedName>
    <alternativeName>
        <fullName evidence="1">K(+)/H(+) antiporter</fullName>
    </alternativeName>
</protein>
<name>KEFC_SALPC</name>
<sequence>MDSHTLLQALIYLGSAALIVPIAVRLGLGSVLGYLIAGCIIGPWGLRLVTDAESILHFAEIGVVLMLFVIGLELDPQRLWKLRASVFGGGALQMVVCGGLIGLFCMFLGLRWQVAELIGMTLALSSTAIAMQAMNERNLTVSQVGRSAFAVLLFQDIAAIPLVAMIPLLAASGASTTLGAFALSALKVAGALALVVLLGRYVTRPALRFVARSGLREVFSAVALFLVFGFGLLLEEVGLSMAMGAFLAGVLLASSEYRHALESDIEPFKGLLLGLFFIGVGMSIDFGTLVENPLRILLLLAGFLAIKIVMLWLVARPLGVPAKQRRWFAVLLGQGSEFAFVVFGAAQMADVLEPEWAKALTLAVALSMAATPIFLVLLTRMEKTATGEAREADEIDEEQPRVIVAGFGRFGQIAGRLLLSSGVKMVVLDHDPDHIETLRKFGMKVFYGDATRMDLLESAGAAKAEVLINAIDDPQTNLQLSELVKSHFPHLQIIARARDVDHYIRLRQAGVAMPERETFEGALKSGRQALEALGLGRYEARERADLFRHFNTRMVEEMAKGENDPLSRAAAYKRTSAMLSEIITEDREHLSLIQRHGWQGTAEGKHSGEAADEPEVKPSI</sequence>
<organism>
    <name type="scientific">Salmonella paratyphi C (strain RKS4594)</name>
    <dbReference type="NCBI Taxonomy" id="476213"/>
    <lineage>
        <taxon>Bacteria</taxon>
        <taxon>Pseudomonadati</taxon>
        <taxon>Pseudomonadota</taxon>
        <taxon>Gammaproteobacteria</taxon>
        <taxon>Enterobacterales</taxon>
        <taxon>Enterobacteriaceae</taxon>
        <taxon>Salmonella</taxon>
    </lineage>
</organism>
<feature type="chain" id="PRO_1000184618" description="Glutathione-regulated potassium-efflux system protein KefC">
    <location>
        <begin position="1"/>
        <end position="620"/>
    </location>
</feature>
<feature type="transmembrane region" description="Helical" evidence="1">
    <location>
        <begin position="4"/>
        <end position="24"/>
    </location>
</feature>
<feature type="transmembrane region" description="Helical" evidence="1">
    <location>
        <begin position="26"/>
        <end position="46"/>
    </location>
</feature>
<feature type="transmembrane region" description="Helical" evidence="1">
    <location>
        <begin position="54"/>
        <end position="74"/>
    </location>
</feature>
<feature type="transmembrane region" description="Helical" evidence="1">
    <location>
        <begin position="90"/>
        <end position="110"/>
    </location>
</feature>
<feature type="transmembrane region" description="Helical" evidence="1">
    <location>
        <begin position="114"/>
        <end position="134"/>
    </location>
</feature>
<feature type="transmembrane region" description="Helical" evidence="1">
    <location>
        <begin position="149"/>
        <end position="169"/>
    </location>
</feature>
<feature type="transmembrane region" description="Helical" evidence="1">
    <location>
        <begin position="178"/>
        <end position="198"/>
    </location>
</feature>
<feature type="transmembrane region" description="Helical" evidence="1">
    <location>
        <begin position="218"/>
        <end position="238"/>
    </location>
</feature>
<feature type="transmembrane region" description="Helical" evidence="1">
    <location>
        <begin position="270"/>
        <end position="290"/>
    </location>
</feature>
<feature type="transmembrane region" description="Helical" evidence="1">
    <location>
        <begin position="294"/>
        <end position="314"/>
    </location>
</feature>
<feature type="transmembrane region" description="Helical" evidence="1">
    <location>
        <begin position="327"/>
        <end position="347"/>
    </location>
</feature>
<feature type="transmembrane region" description="Helical" evidence="1">
    <location>
        <begin position="359"/>
        <end position="379"/>
    </location>
</feature>
<feature type="domain" description="RCK N-terminal" evidence="2">
    <location>
        <begin position="399"/>
        <end position="518"/>
    </location>
</feature>
<feature type="region of interest" description="Disordered" evidence="3">
    <location>
        <begin position="599"/>
        <end position="620"/>
    </location>
</feature>